<dbReference type="EC" id="6.3.2.6" evidence="1"/>
<dbReference type="EMBL" id="AM286690">
    <property type="protein sequence ID" value="CAL16227.1"/>
    <property type="molecule type" value="Genomic_DNA"/>
</dbReference>
<dbReference type="RefSeq" id="WP_011588063.1">
    <property type="nucleotide sequence ID" value="NC_008260.1"/>
</dbReference>
<dbReference type="SMR" id="Q0VRH1"/>
<dbReference type="STRING" id="393595.ABO_0779"/>
<dbReference type="KEGG" id="abo:ABO_0779"/>
<dbReference type="eggNOG" id="COG0152">
    <property type="taxonomic scope" value="Bacteria"/>
</dbReference>
<dbReference type="HOGENOM" id="CLU_061495_2_0_6"/>
<dbReference type="OrthoDB" id="9801549at2"/>
<dbReference type="UniPathway" id="UPA00074">
    <property type="reaction ID" value="UER00131"/>
</dbReference>
<dbReference type="Proteomes" id="UP000008871">
    <property type="component" value="Chromosome"/>
</dbReference>
<dbReference type="GO" id="GO:0005829">
    <property type="term" value="C:cytosol"/>
    <property type="evidence" value="ECO:0007669"/>
    <property type="project" value="TreeGrafter"/>
</dbReference>
<dbReference type="GO" id="GO:0005524">
    <property type="term" value="F:ATP binding"/>
    <property type="evidence" value="ECO:0007669"/>
    <property type="project" value="UniProtKB-KW"/>
</dbReference>
<dbReference type="GO" id="GO:0004639">
    <property type="term" value="F:phosphoribosylaminoimidazolesuccinocarboxamide synthase activity"/>
    <property type="evidence" value="ECO:0007669"/>
    <property type="project" value="UniProtKB-UniRule"/>
</dbReference>
<dbReference type="GO" id="GO:0006189">
    <property type="term" value="P:'de novo' IMP biosynthetic process"/>
    <property type="evidence" value="ECO:0007669"/>
    <property type="project" value="UniProtKB-UniRule"/>
</dbReference>
<dbReference type="GO" id="GO:0009236">
    <property type="term" value="P:cobalamin biosynthetic process"/>
    <property type="evidence" value="ECO:0007669"/>
    <property type="project" value="InterPro"/>
</dbReference>
<dbReference type="CDD" id="cd01415">
    <property type="entry name" value="SAICAR_synt_PurC"/>
    <property type="match status" value="1"/>
</dbReference>
<dbReference type="FunFam" id="3.30.200.20:FF:000086">
    <property type="entry name" value="Phosphoribosylaminoimidazole-succinocarboxamide synthase"/>
    <property type="match status" value="1"/>
</dbReference>
<dbReference type="FunFam" id="3.30.470.20:FF:000006">
    <property type="entry name" value="Phosphoribosylaminoimidazole-succinocarboxamide synthase"/>
    <property type="match status" value="1"/>
</dbReference>
<dbReference type="Gene3D" id="3.30.470.20">
    <property type="entry name" value="ATP-grasp fold, B domain"/>
    <property type="match status" value="1"/>
</dbReference>
<dbReference type="Gene3D" id="3.30.200.20">
    <property type="entry name" value="Phosphorylase Kinase, domain 1"/>
    <property type="match status" value="1"/>
</dbReference>
<dbReference type="HAMAP" id="MF_00137">
    <property type="entry name" value="SAICAR_synth"/>
    <property type="match status" value="1"/>
</dbReference>
<dbReference type="InterPro" id="IPR028923">
    <property type="entry name" value="SAICAR_synt/ADE2_N"/>
</dbReference>
<dbReference type="InterPro" id="IPR033934">
    <property type="entry name" value="SAICAR_synt_PurC"/>
</dbReference>
<dbReference type="InterPro" id="IPR001636">
    <property type="entry name" value="SAICAR_synth"/>
</dbReference>
<dbReference type="InterPro" id="IPR050089">
    <property type="entry name" value="SAICAR_synthetase"/>
</dbReference>
<dbReference type="InterPro" id="IPR018236">
    <property type="entry name" value="SAICAR_synthetase_CS"/>
</dbReference>
<dbReference type="NCBIfam" id="TIGR00081">
    <property type="entry name" value="purC"/>
    <property type="match status" value="1"/>
</dbReference>
<dbReference type="PANTHER" id="PTHR43599">
    <property type="entry name" value="MULTIFUNCTIONAL PROTEIN ADE2"/>
    <property type="match status" value="1"/>
</dbReference>
<dbReference type="PANTHER" id="PTHR43599:SF3">
    <property type="entry name" value="SI:DKEY-6E2.2"/>
    <property type="match status" value="1"/>
</dbReference>
<dbReference type="Pfam" id="PF01259">
    <property type="entry name" value="SAICAR_synt"/>
    <property type="match status" value="1"/>
</dbReference>
<dbReference type="SUPFAM" id="SSF56104">
    <property type="entry name" value="SAICAR synthase-like"/>
    <property type="match status" value="1"/>
</dbReference>
<dbReference type="PROSITE" id="PS01057">
    <property type="entry name" value="SAICAR_SYNTHETASE_1"/>
    <property type="match status" value="1"/>
</dbReference>
<dbReference type="PROSITE" id="PS01058">
    <property type="entry name" value="SAICAR_SYNTHETASE_2"/>
    <property type="match status" value="1"/>
</dbReference>
<gene>
    <name evidence="1" type="primary">purC</name>
    <name type="ordered locus">ABO_0779</name>
</gene>
<accession>Q0VRH1</accession>
<proteinExistence type="inferred from homology"/>
<protein>
    <recommendedName>
        <fullName evidence="1">Phosphoribosylaminoimidazole-succinocarboxamide synthase</fullName>
        <ecNumber evidence="1">6.3.2.6</ecNumber>
    </recommendedName>
    <alternativeName>
        <fullName evidence="1">SAICAR synthetase</fullName>
    </alternativeName>
</protein>
<comment type="catalytic activity">
    <reaction evidence="1">
        <text>5-amino-1-(5-phospho-D-ribosyl)imidazole-4-carboxylate + L-aspartate + ATP = (2S)-2-[5-amino-1-(5-phospho-beta-D-ribosyl)imidazole-4-carboxamido]succinate + ADP + phosphate + 2 H(+)</text>
        <dbReference type="Rhea" id="RHEA:22628"/>
        <dbReference type="ChEBI" id="CHEBI:15378"/>
        <dbReference type="ChEBI" id="CHEBI:29991"/>
        <dbReference type="ChEBI" id="CHEBI:30616"/>
        <dbReference type="ChEBI" id="CHEBI:43474"/>
        <dbReference type="ChEBI" id="CHEBI:58443"/>
        <dbReference type="ChEBI" id="CHEBI:77657"/>
        <dbReference type="ChEBI" id="CHEBI:456216"/>
        <dbReference type="EC" id="6.3.2.6"/>
    </reaction>
</comment>
<comment type="pathway">
    <text evidence="1">Purine metabolism; IMP biosynthesis via de novo pathway; 5-amino-1-(5-phospho-D-ribosyl)imidazole-4-carboxamide from 5-amino-1-(5-phospho-D-ribosyl)imidazole-4-carboxylate: step 1/2.</text>
</comment>
<comment type="similarity">
    <text evidence="1">Belongs to the SAICAR synthetase family.</text>
</comment>
<keyword id="KW-0067">ATP-binding</keyword>
<keyword id="KW-0436">Ligase</keyword>
<keyword id="KW-0547">Nucleotide-binding</keyword>
<keyword id="KW-0658">Purine biosynthesis</keyword>
<keyword id="KW-1185">Reference proteome</keyword>
<feature type="chain" id="PRO_1000018661" description="Phosphoribosylaminoimidazole-succinocarboxamide synthase">
    <location>
        <begin position="1"/>
        <end position="238"/>
    </location>
</feature>
<organism>
    <name type="scientific">Alcanivorax borkumensis (strain ATCC 700651 / DSM 11573 / NCIMB 13689 / SK2)</name>
    <dbReference type="NCBI Taxonomy" id="393595"/>
    <lineage>
        <taxon>Bacteria</taxon>
        <taxon>Pseudomonadati</taxon>
        <taxon>Pseudomonadota</taxon>
        <taxon>Gammaproteobacteria</taxon>
        <taxon>Oceanospirillales</taxon>
        <taxon>Alcanivoracaceae</taxon>
        <taxon>Alcanivorax</taxon>
    </lineage>
</organism>
<name>PUR7_ALCBS</name>
<reference key="1">
    <citation type="journal article" date="2006" name="Nat. Biotechnol.">
        <title>Genome sequence of the ubiquitous hydrocarbon-degrading marine bacterium Alcanivorax borkumensis.</title>
        <authorList>
            <person name="Schneiker S."/>
            <person name="Martins dos Santos V.A.P."/>
            <person name="Bartels D."/>
            <person name="Bekel T."/>
            <person name="Brecht M."/>
            <person name="Buhrmester J."/>
            <person name="Chernikova T.N."/>
            <person name="Denaro R."/>
            <person name="Ferrer M."/>
            <person name="Gertler C."/>
            <person name="Goesmann A."/>
            <person name="Golyshina O.V."/>
            <person name="Kaminski F."/>
            <person name="Khachane A.N."/>
            <person name="Lang S."/>
            <person name="Linke B."/>
            <person name="McHardy A.C."/>
            <person name="Meyer F."/>
            <person name="Nechitaylo T."/>
            <person name="Puehler A."/>
            <person name="Regenhardt D."/>
            <person name="Rupp O."/>
            <person name="Sabirova J.S."/>
            <person name="Selbitschka W."/>
            <person name="Yakimov M.M."/>
            <person name="Timmis K.N."/>
            <person name="Vorhoelter F.-J."/>
            <person name="Weidner S."/>
            <person name="Kaiser O."/>
            <person name="Golyshin P.N."/>
        </authorList>
    </citation>
    <scope>NUCLEOTIDE SEQUENCE [LARGE SCALE GENOMIC DNA]</scope>
    <source>
        <strain>ATCC 700651 / DSM 11573 / NCIMB 13689 / SK2</strain>
    </source>
</reference>
<sequence>MEKRDELYAGKAKSVYTTDDEDMLIMLFRDDTSAFDGKKKEALARKGAVNNQFNAAIMEKLKAAGIPCHFEKTLSATESLVKKLDMIPVECVVRNIAAGSICRRLGVEEGLELTPPTFEFFLKDDDLGDPMVNDFHIRSFGWASDDQVAQMKTLTFAVNDVLKQLFLDGGMLLVDYKLEFGMFKGEVLLGDEFSPDGCRLWDKDSREKLDKDRFRQGLGGVVEAYEEVGKRLGMTFEY</sequence>
<evidence type="ECO:0000255" key="1">
    <source>
        <dbReference type="HAMAP-Rule" id="MF_00137"/>
    </source>
</evidence>